<name>MED14_HUMAN</name>
<keyword id="KW-0002">3D-structure</keyword>
<keyword id="KW-0010">Activator</keyword>
<keyword id="KW-0903">Direct protein sequencing</keyword>
<keyword id="KW-0539">Nucleus</keyword>
<keyword id="KW-0597">Phosphoprotein</keyword>
<keyword id="KW-1267">Proteomics identification</keyword>
<keyword id="KW-1185">Reference proteome</keyword>
<keyword id="KW-0677">Repeat</keyword>
<keyword id="KW-0804">Transcription</keyword>
<keyword id="KW-0805">Transcription regulation</keyword>
<reference key="1">
    <citation type="journal article" date="1998" name="Genomics">
        <title>Detection and isolation of a novel human gene located on Xp11.2-p11.4 that escapes X-inactivation using a two-dimensional DNA mapping method.</title>
        <authorList>
            <person name="Yoshikawa H."/>
            <person name="Fujiyama A."/>
            <person name="Nakai K."/>
            <person name="Inazawa J."/>
            <person name="Matsubara K."/>
        </authorList>
    </citation>
    <scope>NUCLEOTIDE SEQUENCE [GENOMIC DNA / MRNA]</scope>
</reference>
<reference key="2">
    <citation type="journal article" date="1999" name="Nature">
        <title>The transcriptional cofactor complex CRSP is required for activity of the enhancer-binding protein Sp1.</title>
        <authorList>
            <person name="Ryu S."/>
            <person name="Zhou S."/>
            <person name="Ladurner A.G."/>
            <person name="Tjian R."/>
        </authorList>
    </citation>
    <scope>NUCLEOTIDE SEQUENCE [MRNA]</scope>
</reference>
<reference key="3">
    <citation type="journal article" date="1999" name="Nature">
        <title>Ligand-dependent transcription activation by nuclear receptors requires the DRIP complex.</title>
        <authorList>
            <person name="Rachez C."/>
            <person name="Lemon B.D."/>
            <person name="Suldan Z."/>
            <person name="Bromleigh V."/>
            <person name="Gamble M."/>
            <person name="Naeaer A.M."/>
            <person name="Erdjument-Bromage H."/>
            <person name="Tempst P."/>
            <person name="Freedman L.P."/>
        </authorList>
    </citation>
    <scope>NUCLEOTIDE SEQUENCE [MRNA]</scope>
    <scope>PROTEIN SEQUENCE OF 250-263 AND 1106-1146</scope>
    <scope>IDENTIFICATION IN ARC COMPLEX</scope>
    <source>
        <tissue>Cervix carcinoma</tissue>
    </source>
</reference>
<reference key="4">
    <citation type="journal article" date="1999" name="Mol. Cell">
        <title>A novel human SRB/MED-containing cofactor complex, SMCC, involved in transcription regulation.</title>
        <authorList>
            <person name="Gu W."/>
            <person name="Malik S."/>
            <person name="Ito M."/>
            <person name="Yuan C.-X."/>
            <person name="Fondell J.D."/>
            <person name="Zhang X."/>
            <person name="Martinez E."/>
            <person name="Qin J."/>
            <person name="Roeder R.G."/>
        </authorList>
    </citation>
    <scope>NUCLEOTIDE SEQUENCE [MRNA]</scope>
    <scope>IDENTIFICATION BY MASS SPECTROMETRY</scope>
    <scope>IDENTIFICATION IN THE SMCC COMPLEX</scope>
</reference>
<reference key="5">
    <citation type="journal article" date="1999" name="Mol. Cell">
        <authorList>
            <person name="Gu W."/>
            <person name="Malik S."/>
            <person name="Ito M."/>
            <person name="Yuan C.-X."/>
            <person name="Fondell J.D."/>
            <person name="Zhang X."/>
            <person name="Martinez E."/>
            <person name="Qin J."/>
            <person name="Roeder R.G."/>
        </authorList>
    </citation>
    <scope>ERRATUM OF PUBMED:10024883</scope>
</reference>
<reference key="6">
    <citation type="journal article" date="2004" name="Genome Res.">
        <title>The status, quality, and expansion of the NIH full-length cDNA project: the Mammalian Gene Collection (MGC).</title>
        <authorList>
            <consortium name="The MGC Project Team"/>
        </authorList>
    </citation>
    <scope>NUCLEOTIDE SEQUENCE [LARGE SCALE MRNA]</scope>
    <source>
        <tissue>Placenta</tissue>
    </source>
</reference>
<reference key="7">
    <citation type="journal article" date="1998" name="Mol. Cell">
        <title>NAT, a human complex containing Srb polypeptides that functions as a negative regulator of activated transcription.</title>
        <authorList>
            <person name="Sun X."/>
            <person name="Zhang Y."/>
            <person name="Cho H."/>
            <person name="Rickert P."/>
            <person name="Lees E."/>
            <person name="Lane W.S."/>
            <person name="Reinberg D."/>
        </authorList>
    </citation>
    <scope>IDENTIFICATION BY MASS SPECTROMETRY</scope>
    <scope>IDENTIFICATION IN A FORM OF THE MEDIATOR COMPLEX</scope>
</reference>
<reference key="8">
    <citation type="journal article" date="1999" name="Nature">
        <title>Composite co-activator ARC mediates chromatin-directed transcriptional activation.</title>
        <authorList>
            <person name="Naeaer A.M."/>
            <person name="Beaurang P.A."/>
            <person name="Zhou S."/>
            <person name="Abraham S."/>
            <person name="Solomon W.B."/>
            <person name="Tjian R."/>
        </authorList>
    </citation>
    <scope>PROTEIN SEQUENCE OF 4-13 AND 1256-1264</scope>
    <scope>IDENTIFICATION IN ARC COMPLEX</scope>
</reference>
<reference key="9">
    <citation type="journal article" date="2002" name="J. Biol. Chem.">
        <title>A coregulatory role for the TRAP-mediator complex in androgen receptor-mediated gene expression.</title>
        <authorList>
            <person name="Wang Q."/>
            <person name="Sharma D."/>
            <person name="Ren Y."/>
            <person name="Fondell J.D."/>
        </authorList>
    </citation>
    <scope>INTERACTION WITH AR</scope>
</reference>
<reference key="10">
    <citation type="journal article" date="2002" name="Proc. Natl. Acad. Sci. U.S.A.">
        <title>The TRAP/Mediator coactivator complex interacts directly with estrogen receptors alpha and beta through the TRAP220 subunit and directly enhances estrogen receptor function in vitro.</title>
        <authorList>
            <person name="Kang Y.K."/>
            <person name="Guermah M."/>
            <person name="Yuan C.-X."/>
            <person name="Roeder R.G."/>
        </authorList>
    </citation>
    <scope>IDENTIFICATION BY MASS SPECTROMETRY</scope>
    <scope>IDENTIFICATION IN THE MEDIATOR COMPLEX</scope>
    <scope>INTERACTION OF THE MEDIATOR COMPLEX WITH ESR1 AND ESR2</scope>
</reference>
<reference key="11">
    <citation type="journal article" date="2003" name="Mol. Cell. Biol.">
        <title>Role of metazoan mediator proteins in interferon-responsive transcription.</title>
        <authorList>
            <person name="Lau J.F."/>
            <person name="Nusinzon I."/>
            <person name="Burakov D."/>
            <person name="Freedman L.P."/>
            <person name="Horvath C.M."/>
        </authorList>
    </citation>
    <scope>INTERACTION WITH STAT2</scope>
</reference>
<reference key="12">
    <citation type="journal article" date="2004" name="Mol. Cell">
        <title>A set of consensus mammalian mediator subunits identified by multidimensional protein identification technology.</title>
        <authorList>
            <person name="Sato S."/>
            <person name="Tomomori-Sato C."/>
            <person name="Parmely T.J."/>
            <person name="Florens L."/>
            <person name="Zybailov B."/>
            <person name="Swanson S.K."/>
            <person name="Banks C.A.S."/>
            <person name="Jin J."/>
            <person name="Cai Y."/>
            <person name="Washburn M.P."/>
            <person name="Conaway J.W."/>
            <person name="Conaway R.C."/>
        </authorList>
    </citation>
    <scope>IDENTIFICATION BY MASS SPECTROMETRY</scope>
    <scope>IDENTIFICATION IN THE MEDIATOR COMPLEX</scope>
</reference>
<reference key="13">
    <citation type="journal article" date="2004" name="Mol. Cell. Biol.">
        <title>Selective coactivator interactions in gene activation by SREBP-1a and -1c.</title>
        <authorList>
            <person name="Toth J.I."/>
            <person name="Datta S."/>
            <person name="Athanikar J.N."/>
            <person name="Freedman L.P."/>
            <person name="Osborne T.F."/>
        </authorList>
    </citation>
    <scope>FUNCTION</scope>
    <scope>INTERACTION WITH SREBF1</scope>
</reference>
<reference key="14">
    <citation type="journal article" date="2005" name="J. Biol. Chem.">
        <title>DRIP150 coactivation of estrogen receptor alpha in ZR-75 breast cancer cells is independent of LXXLL motifs.</title>
        <authorList>
            <person name="Lee J.E."/>
            <person name="Kim K."/>
            <person name="Sacchettini J.C."/>
            <person name="Smith C.V."/>
            <person name="Safe S."/>
        </authorList>
    </citation>
    <scope>FUNCTION</scope>
    <scope>INTERACTION WITH ESR1</scope>
</reference>
<reference key="15">
    <citation type="journal article" date="2005" name="Mol. Cell">
        <title>MED1/TRAP220 exists predominantly in a TRAP/Mediator subpopulation enriched in RNA polymerase II and is required for ER-mediated transcription.</title>
        <authorList>
            <person name="Zhang X."/>
            <person name="Krutchinsky A."/>
            <person name="Fukuda A."/>
            <person name="Chen W."/>
            <person name="Yamamura S."/>
            <person name="Chait B.T."/>
            <person name="Roeder R.G."/>
        </authorList>
    </citation>
    <scope>INTERACTION WITH MED1 AND MED10</scope>
    <scope>IDENTIFICATION BY MASS SPECTROMETRY</scope>
    <scope>IDENTIFICATION IN THE MEDIATOR COMPLEX</scope>
    <scope>ASSOCIATION OF THE MEDIATOR COMPLEX WITH RNA POLYMERASE II</scope>
</reference>
<reference key="16">
    <citation type="journal article" date="2006" name="J. Biol. Chem.">
        <title>Human Mediator enhances basal transcription by facilitating recruitment of transcription factor IIB during preinitiation complex assembly.</title>
        <authorList>
            <person name="Baek H.J."/>
            <person name="Kang Y.K."/>
            <person name="Roeder R.G."/>
        </authorList>
    </citation>
    <scope>FUNCTION</scope>
    <scope>INTERACTION WITH MED1 AND MED10</scope>
</reference>
<reference key="17">
    <citation type="journal article" date="2008" name="Mol. Cell">
        <title>Kinase-selective enrichment enables quantitative phosphoproteomics of the kinome across the cell cycle.</title>
        <authorList>
            <person name="Daub H."/>
            <person name="Olsen J.V."/>
            <person name="Bairlein M."/>
            <person name="Gnad F."/>
            <person name="Oppermann F.S."/>
            <person name="Korner R."/>
            <person name="Greff Z."/>
            <person name="Keri G."/>
            <person name="Stemmann O."/>
            <person name="Mann M."/>
        </authorList>
    </citation>
    <scope>PHOSPHORYLATION [LARGE SCALE ANALYSIS] AT SER-617</scope>
    <scope>IDENTIFICATION BY MASS SPECTROMETRY [LARGE SCALE ANALYSIS]</scope>
    <source>
        <tissue>Cervix carcinoma</tissue>
    </source>
</reference>
<reference key="18">
    <citation type="journal article" date="2008" name="Proc. Natl. Acad. Sci. U.S.A.">
        <title>A quantitative atlas of mitotic phosphorylation.</title>
        <authorList>
            <person name="Dephoure N."/>
            <person name="Zhou C."/>
            <person name="Villen J."/>
            <person name="Beausoleil S.A."/>
            <person name="Bakalarski C.E."/>
            <person name="Elledge S.J."/>
            <person name="Gygi S.P."/>
        </authorList>
    </citation>
    <scope>PHOSPHORYLATION [LARGE SCALE ANALYSIS] AT SER-1128; SER-1136 AND SER-1144</scope>
    <scope>IDENTIFICATION BY MASS SPECTROMETRY [LARGE SCALE ANALYSIS]</scope>
    <source>
        <tissue>Cervix carcinoma</tissue>
    </source>
</reference>
<reference key="19">
    <citation type="journal article" date="2009" name="Mol. Cell. Proteomics">
        <title>Large-scale proteomics analysis of the human kinome.</title>
        <authorList>
            <person name="Oppermann F.S."/>
            <person name="Gnad F."/>
            <person name="Olsen J.V."/>
            <person name="Hornberger R."/>
            <person name="Greff Z."/>
            <person name="Keri G."/>
            <person name="Mann M."/>
            <person name="Daub H."/>
        </authorList>
    </citation>
    <scope>PHOSPHORYLATION [LARGE SCALE ANALYSIS] AT SER-617 AND SER-986</scope>
    <scope>IDENTIFICATION BY MASS SPECTROMETRY [LARGE SCALE ANALYSIS]</scope>
</reference>
<reference key="20">
    <citation type="journal article" date="2009" name="Sci. Signal.">
        <title>Quantitative phosphoproteomic analysis of T cell receptor signaling reveals system-wide modulation of protein-protein interactions.</title>
        <authorList>
            <person name="Mayya V."/>
            <person name="Lundgren D.H."/>
            <person name="Hwang S.-I."/>
            <person name="Rezaul K."/>
            <person name="Wu L."/>
            <person name="Eng J.K."/>
            <person name="Rodionov V."/>
            <person name="Han D.K."/>
        </authorList>
    </citation>
    <scope>PHOSPHORYLATION [LARGE SCALE ANALYSIS] AT SER-1112; SER-1128 AND SER-1136</scope>
    <scope>IDENTIFICATION BY MASS SPECTROMETRY [LARGE SCALE ANALYSIS]</scope>
    <source>
        <tissue>Leukemic T-cell</tissue>
    </source>
</reference>
<reference key="21">
    <citation type="journal article" date="2010" name="Sci. Signal.">
        <title>Quantitative phosphoproteomics reveals widespread full phosphorylation site occupancy during mitosis.</title>
        <authorList>
            <person name="Olsen J.V."/>
            <person name="Vermeulen M."/>
            <person name="Santamaria A."/>
            <person name="Kumar C."/>
            <person name="Miller M.L."/>
            <person name="Jensen L.J."/>
            <person name="Gnad F."/>
            <person name="Cox J."/>
            <person name="Jensen T.S."/>
            <person name="Nigg E.A."/>
            <person name="Brunak S."/>
            <person name="Mann M."/>
        </authorList>
    </citation>
    <scope>PHOSPHORYLATION [LARGE SCALE ANALYSIS] AT SER-1112; SER-1119; SER-1128 AND SER-1136</scope>
    <scope>IDENTIFICATION BY MASS SPECTROMETRY [LARGE SCALE ANALYSIS]</scope>
    <source>
        <tissue>Cervix carcinoma</tissue>
    </source>
</reference>
<reference key="22">
    <citation type="journal article" date="2011" name="BMC Syst. Biol.">
        <title>Initial characterization of the human central proteome.</title>
        <authorList>
            <person name="Burkard T.R."/>
            <person name="Planyavsky M."/>
            <person name="Kaupe I."/>
            <person name="Breitwieser F.P."/>
            <person name="Buerckstuemmer T."/>
            <person name="Bennett K.L."/>
            <person name="Superti-Furga G."/>
            <person name="Colinge J."/>
        </authorList>
    </citation>
    <scope>IDENTIFICATION BY MASS SPECTROMETRY [LARGE SCALE ANALYSIS]</scope>
</reference>
<reference key="23">
    <citation type="journal article" date="2013" name="J. Proteome Res.">
        <title>Toward a comprehensive characterization of a human cancer cell phosphoproteome.</title>
        <authorList>
            <person name="Zhou H."/>
            <person name="Di Palma S."/>
            <person name="Preisinger C."/>
            <person name="Peng M."/>
            <person name="Polat A.N."/>
            <person name="Heck A.J."/>
            <person name="Mohammed S."/>
        </authorList>
    </citation>
    <scope>PHOSPHORYLATION [LARGE SCALE ANALYSIS] AT SER-617; SER-1112; SER-1119; SER-1128; SER-1136 AND SER-1144</scope>
    <scope>IDENTIFICATION BY MASS SPECTROMETRY [LARGE SCALE ANALYSIS]</scope>
    <source>
        <tissue>Cervix carcinoma</tissue>
        <tissue>Erythroleukemia</tissue>
    </source>
</reference>
<reference key="24">
    <citation type="journal article" date="2006" name="Science">
        <title>The consensus coding sequences of human breast and colorectal cancers.</title>
        <authorList>
            <person name="Sjoeblom T."/>
            <person name="Jones S."/>
            <person name="Wood L.D."/>
            <person name="Parsons D.W."/>
            <person name="Lin J."/>
            <person name="Barber T.D."/>
            <person name="Mandelker D."/>
            <person name="Leary R.J."/>
            <person name="Ptak J."/>
            <person name="Silliman N."/>
            <person name="Szabo S."/>
            <person name="Buckhaults P."/>
            <person name="Farrell C."/>
            <person name="Meeh P."/>
            <person name="Markowitz S.D."/>
            <person name="Willis J."/>
            <person name="Dawson D."/>
            <person name="Willson J.K.V."/>
            <person name="Gazdar A.F."/>
            <person name="Hartigan J."/>
            <person name="Wu L."/>
            <person name="Liu C."/>
            <person name="Parmigiani G."/>
            <person name="Park B.H."/>
            <person name="Bachman K.E."/>
            <person name="Papadopoulos N."/>
            <person name="Vogelstein B."/>
            <person name="Kinzler K.W."/>
            <person name="Velculescu V.E."/>
        </authorList>
    </citation>
    <scope>VARIANT [LARGE SCALE ANALYSIS] LEU-1325</scope>
</reference>
<dbReference type="EMBL" id="AB006651">
    <property type="protein sequence ID" value="BAA28626.1"/>
    <property type="molecule type" value="mRNA"/>
</dbReference>
<dbReference type="EMBL" id="AB006652">
    <property type="protein sequence ID" value="BAA28627.1"/>
    <property type="molecule type" value="Genomic_DNA"/>
</dbReference>
<dbReference type="EMBL" id="AF104256">
    <property type="protein sequence ID" value="AAD12725.1"/>
    <property type="molecule type" value="mRNA"/>
</dbReference>
<dbReference type="EMBL" id="AF304448">
    <property type="protein sequence ID" value="AAG22547.1"/>
    <property type="molecule type" value="mRNA"/>
</dbReference>
<dbReference type="EMBL" id="AF135802">
    <property type="protein sequence ID" value="AAD24360.1"/>
    <property type="molecule type" value="mRNA"/>
</dbReference>
<dbReference type="EMBL" id="BC098377">
    <property type="protein sequence ID" value="AAH98377.1"/>
    <property type="molecule type" value="mRNA"/>
</dbReference>
<dbReference type="EMBL" id="BC132672">
    <property type="protein sequence ID" value="AAI32673.1"/>
    <property type="molecule type" value="mRNA"/>
</dbReference>
<dbReference type="EMBL" id="BC132674">
    <property type="protein sequence ID" value="AAI32675.1"/>
    <property type="molecule type" value="mRNA"/>
</dbReference>
<dbReference type="CCDS" id="CCDS14254.1"/>
<dbReference type="RefSeq" id="NP_004220.2">
    <property type="nucleotide sequence ID" value="NM_004229.3"/>
</dbReference>
<dbReference type="PDB" id="7EMF">
    <property type="method" value="EM"/>
    <property type="resolution" value="3.50 A"/>
    <property type="chains" value="N=1-1454"/>
</dbReference>
<dbReference type="PDB" id="7ENA">
    <property type="method" value="EM"/>
    <property type="resolution" value="4.07 A"/>
    <property type="chains" value="n=1-1454"/>
</dbReference>
<dbReference type="PDB" id="7ENC">
    <property type="method" value="EM"/>
    <property type="resolution" value="4.13 A"/>
    <property type="chains" value="n=1-1454"/>
</dbReference>
<dbReference type="PDB" id="7ENJ">
    <property type="method" value="EM"/>
    <property type="resolution" value="4.40 A"/>
    <property type="chains" value="N=1-1454"/>
</dbReference>
<dbReference type="PDB" id="7LBM">
    <property type="method" value="EM"/>
    <property type="resolution" value="4.80 A"/>
    <property type="chains" value="r=1-1454"/>
</dbReference>
<dbReference type="PDB" id="7NVR">
    <property type="method" value="EM"/>
    <property type="resolution" value="4.50 A"/>
    <property type="chains" value="l=1-1454"/>
</dbReference>
<dbReference type="PDB" id="8GXQ">
    <property type="method" value="EM"/>
    <property type="resolution" value="5.04 A"/>
    <property type="chains" value="n=1-1454"/>
</dbReference>
<dbReference type="PDB" id="8GXS">
    <property type="method" value="EM"/>
    <property type="resolution" value="4.16 A"/>
    <property type="chains" value="n=1-1454"/>
</dbReference>
<dbReference type="PDB" id="8T9D">
    <property type="method" value="EM"/>
    <property type="resolution" value="4.66 A"/>
    <property type="chains" value="I=1-1454"/>
</dbReference>
<dbReference type="PDB" id="8TQW">
    <property type="method" value="EM"/>
    <property type="resolution" value="8.20 A"/>
    <property type="chains" value="N=1-1454"/>
</dbReference>
<dbReference type="PDB" id="8TRH">
    <property type="method" value="EM"/>
    <property type="resolution" value="3.70 A"/>
    <property type="chains" value="N=1-1454"/>
</dbReference>
<dbReference type="PDBsum" id="7EMF"/>
<dbReference type="PDBsum" id="7ENA"/>
<dbReference type="PDBsum" id="7ENC"/>
<dbReference type="PDBsum" id="7ENJ"/>
<dbReference type="PDBsum" id="7LBM"/>
<dbReference type="PDBsum" id="7NVR"/>
<dbReference type="PDBsum" id="8GXQ"/>
<dbReference type="PDBsum" id="8GXS"/>
<dbReference type="PDBsum" id="8T9D"/>
<dbReference type="PDBsum" id="8TQW"/>
<dbReference type="PDBsum" id="8TRH"/>
<dbReference type="EMDB" id="EMD-12610"/>
<dbReference type="EMDB" id="EMD-23255"/>
<dbReference type="EMDB" id="EMD-31191"/>
<dbReference type="EMDB" id="EMD-31204"/>
<dbReference type="EMDB" id="EMD-31207"/>
<dbReference type="EMDB" id="EMD-31211"/>
<dbReference type="EMDB" id="EMD-34359"/>
<dbReference type="EMDB" id="EMD-34360"/>
<dbReference type="EMDB" id="EMD-41107"/>
<dbReference type="EMDB" id="EMD-41565"/>
<dbReference type="EMDB" id="EMD-41580"/>
<dbReference type="SMR" id="O60244"/>
<dbReference type="BioGRID" id="114699">
    <property type="interactions" value="180"/>
</dbReference>
<dbReference type="ComplexPortal" id="CPX-3227">
    <property type="entry name" value="Core mediator complex"/>
</dbReference>
<dbReference type="CORUM" id="O60244"/>
<dbReference type="DIP" id="DIP-31460N"/>
<dbReference type="FunCoup" id="O60244">
    <property type="interactions" value="4733"/>
</dbReference>
<dbReference type="IntAct" id="O60244">
    <property type="interactions" value="95"/>
</dbReference>
<dbReference type="MINT" id="O60244"/>
<dbReference type="STRING" id="9606.ENSP00000323720"/>
<dbReference type="GlyGen" id="O60244">
    <property type="glycosylation" value="5 sites, 1 N-linked glycan (1 site), 1 O-linked glycan (2 sites)"/>
</dbReference>
<dbReference type="iPTMnet" id="O60244"/>
<dbReference type="MetOSite" id="O60244"/>
<dbReference type="PhosphoSitePlus" id="O60244"/>
<dbReference type="BioMuta" id="MED14"/>
<dbReference type="jPOST" id="O60244"/>
<dbReference type="MassIVE" id="O60244"/>
<dbReference type="PaxDb" id="9606-ENSP00000323720"/>
<dbReference type="PeptideAtlas" id="O60244"/>
<dbReference type="ProteomicsDB" id="49278"/>
<dbReference type="Pumba" id="O60244"/>
<dbReference type="Antibodypedia" id="10773">
    <property type="antibodies" value="155 antibodies from 30 providers"/>
</dbReference>
<dbReference type="DNASU" id="9282"/>
<dbReference type="Ensembl" id="ENST00000324817.6">
    <property type="protein sequence ID" value="ENSP00000323720.1"/>
    <property type="gene ID" value="ENSG00000180182.11"/>
</dbReference>
<dbReference type="GeneID" id="9282"/>
<dbReference type="KEGG" id="hsa:9282"/>
<dbReference type="MANE-Select" id="ENST00000324817.6">
    <property type="protein sequence ID" value="ENSP00000323720.1"/>
    <property type="RefSeq nucleotide sequence ID" value="NM_004229.4"/>
    <property type="RefSeq protein sequence ID" value="NP_004220.2"/>
</dbReference>
<dbReference type="UCSC" id="uc004dex.5">
    <property type="organism name" value="human"/>
</dbReference>
<dbReference type="AGR" id="HGNC:2370"/>
<dbReference type="CTD" id="9282"/>
<dbReference type="DisGeNET" id="9282"/>
<dbReference type="GeneCards" id="MED14"/>
<dbReference type="HGNC" id="HGNC:2370">
    <property type="gene designation" value="MED14"/>
</dbReference>
<dbReference type="HPA" id="ENSG00000180182">
    <property type="expression patterns" value="Low tissue specificity"/>
</dbReference>
<dbReference type="MIM" id="300182">
    <property type="type" value="gene"/>
</dbReference>
<dbReference type="neXtProt" id="NX_O60244"/>
<dbReference type="OpenTargets" id="ENSG00000180182"/>
<dbReference type="PharmGKB" id="PA26890"/>
<dbReference type="VEuPathDB" id="HostDB:ENSG00000180182"/>
<dbReference type="eggNOG" id="KOG1875">
    <property type="taxonomic scope" value="Eukaryota"/>
</dbReference>
<dbReference type="GeneTree" id="ENSGT00390000001021"/>
<dbReference type="HOGENOM" id="CLU_001928_0_0_1"/>
<dbReference type="InParanoid" id="O60244"/>
<dbReference type="OMA" id="KQPAYFI"/>
<dbReference type="OrthoDB" id="205099at2759"/>
<dbReference type="PAN-GO" id="O60244">
    <property type="GO annotations" value="4 GO annotations based on evolutionary models"/>
</dbReference>
<dbReference type="PhylomeDB" id="O60244"/>
<dbReference type="TreeFam" id="TF314388"/>
<dbReference type="PathwayCommons" id="O60244"/>
<dbReference type="Reactome" id="R-HSA-1989781">
    <property type="pathway name" value="PPARA activates gene expression"/>
</dbReference>
<dbReference type="Reactome" id="R-HSA-212436">
    <property type="pathway name" value="Generic Transcription Pathway"/>
</dbReference>
<dbReference type="Reactome" id="R-HSA-381340">
    <property type="pathway name" value="Transcriptional regulation of white adipocyte differentiation"/>
</dbReference>
<dbReference type="Reactome" id="R-HSA-9833110">
    <property type="pathway name" value="RSV-host interactions"/>
</dbReference>
<dbReference type="Reactome" id="R-HSA-9841922">
    <property type="pathway name" value="MLL4 and MLL3 complexes regulate expression of PPARG target genes in adipogenesis and hepatic steatosis"/>
</dbReference>
<dbReference type="SignaLink" id="O60244"/>
<dbReference type="SIGNOR" id="O60244"/>
<dbReference type="BioGRID-ORCS" id="9282">
    <property type="hits" value="408 hits in 806 CRISPR screens"/>
</dbReference>
<dbReference type="ChiTaRS" id="MED14">
    <property type="organism name" value="human"/>
</dbReference>
<dbReference type="GeneWiki" id="MED14"/>
<dbReference type="GenomeRNAi" id="9282"/>
<dbReference type="Pharos" id="O60244">
    <property type="development level" value="Tbio"/>
</dbReference>
<dbReference type="PRO" id="PR:O60244"/>
<dbReference type="Proteomes" id="UP000005640">
    <property type="component" value="Chromosome X"/>
</dbReference>
<dbReference type="RNAct" id="O60244">
    <property type="molecule type" value="protein"/>
</dbReference>
<dbReference type="Bgee" id="ENSG00000180182">
    <property type="expression patterns" value="Expressed in secondary oocyte and 203 other cell types or tissues"/>
</dbReference>
<dbReference type="ExpressionAtlas" id="O60244">
    <property type="expression patterns" value="baseline and differential"/>
</dbReference>
<dbReference type="GO" id="GO:0070847">
    <property type="term" value="C:core mediator complex"/>
    <property type="evidence" value="ECO:0000353"/>
    <property type="project" value="ComplexPortal"/>
</dbReference>
<dbReference type="GO" id="GO:0016592">
    <property type="term" value="C:mediator complex"/>
    <property type="evidence" value="ECO:0000314"/>
    <property type="project" value="UniProtKB"/>
</dbReference>
<dbReference type="GO" id="GO:0016020">
    <property type="term" value="C:membrane"/>
    <property type="evidence" value="ECO:0007005"/>
    <property type="project" value="UniProtKB"/>
</dbReference>
<dbReference type="GO" id="GO:0005654">
    <property type="term" value="C:nucleoplasm"/>
    <property type="evidence" value="ECO:0000304"/>
    <property type="project" value="Reactome"/>
</dbReference>
<dbReference type="GO" id="GO:0005634">
    <property type="term" value="C:nucleus"/>
    <property type="evidence" value="ECO:0000314"/>
    <property type="project" value="UniProtKB"/>
</dbReference>
<dbReference type="GO" id="GO:0042809">
    <property type="term" value="F:nuclear vitamin D receptor binding"/>
    <property type="evidence" value="ECO:0000303"/>
    <property type="project" value="UniProtKB"/>
</dbReference>
<dbReference type="GO" id="GO:0003713">
    <property type="term" value="F:transcription coactivator activity"/>
    <property type="evidence" value="ECO:0000314"/>
    <property type="project" value="UniProtKB"/>
</dbReference>
<dbReference type="GO" id="GO:0003712">
    <property type="term" value="F:transcription coregulator activity"/>
    <property type="evidence" value="ECO:0000314"/>
    <property type="project" value="UniProtKB"/>
</dbReference>
<dbReference type="GO" id="GO:0045893">
    <property type="term" value="P:positive regulation of DNA-templated transcription"/>
    <property type="evidence" value="ECO:0000314"/>
    <property type="project" value="UniProtKB"/>
</dbReference>
<dbReference type="GO" id="GO:0045944">
    <property type="term" value="P:positive regulation of transcription by RNA polymerase II"/>
    <property type="evidence" value="ECO:0000314"/>
    <property type="project" value="MGI"/>
</dbReference>
<dbReference type="GO" id="GO:0032968">
    <property type="term" value="P:positive regulation of transcription elongation by RNA polymerase II"/>
    <property type="evidence" value="ECO:0000303"/>
    <property type="project" value="ComplexPortal"/>
</dbReference>
<dbReference type="GO" id="GO:0060261">
    <property type="term" value="P:positive regulation of transcription initiation by RNA polymerase II"/>
    <property type="evidence" value="ECO:0000314"/>
    <property type="project" value="UniProtKB"/>
</dbReference>
<dbReference type="GO" id="GO:0006357">
    <property type="term" value="P:regulation of transcription by RNA polymerase II"/>
    <property type="evidence" value="ECO:0000318"/>
    <property type="project" value="GO_Central"/>
</dbReference>
<dbReference type="GO" id="GO:0051123">
    <property type="term" value="P:RNA polymerase II preinitiation complex assembly"/>
    <property type="evidence" value="ECO:0000303"/>
    <property type="project" value="ComplexPortal"/>
</dbReference>
<dbReference type="GO" id="GO:0035019">
    <property type="term" value="P:somatic stem cell population maintenance"/>
    <property type="evidence" value="ECO:0007669"/>
    <property type="project" value="Ensembl"/>
</dbReference>
<dbReference type="InterPro" id="IPR056877">
    <property type="entry name" value="Med14_C"/>
</dbReference>
<dbReference type="InterPro" id="IPR055122">
    <property type="entry name" value="Med14_N"/>
</dbReference>
<dbReference type="InterPro" id="IPR055113">
    <property type="entry name" value="Med14_RM2"/>
</dbReference>
<dbReference type="InterPro" id="IPR055114">
    <property type="entry name" value="Med14_RM6"/>
</dbReference>
<dbReference type="InterPro" id="IPR055107">
    <property type="entry name" value="Med14_RM8"/>
</dbReference>
<dbReference type="InterPro" id="IPR013947">
    <property type="entry name" value="Mediator_Med14"/>
</dbReference>
<dbReference type="InterPro" id="IPR056879">
    <property type="entry name" value="RM3_Med14"/>
</dbReference>
<dbReference type="InterPro" id="IPR056878">
    <property type="entry name" value="RM5_Med14"/>
</dbReference>
<dbReference type="PANTHER" id="PTHR12809">
    <property type="entry name" value="MEDIATOR COMPLEX SUBUNIT"/>
    <property type="match status" value="1"/>
</dbReference>
<dbReference type="PANTHER" id="PTHR12809:SF2">
    <property type="entry name" value="MEDIATOR OF RNA POLYMERASE II TRANSCRIPTION SUBUNIT 14"/>
    <property type="match status" value="1"/>
</dbReference>
<dbReference type="Pfam" id="PF08638">
    <property type="entry name" value="Med14"/>
    <property type="match status" value="1"/>
</dbReference>
<dbReference type="Pfam" id="PF25069">
    <property type="entry name" value="Med14_C"/>
    <property type="match status" value="1"/>
</dbReference>
<dbReference type="Pfam" id="PF22981">
    <property type="entry name" value="RM2_Med14"/>
    <property type="match status" value="1"/>
</dbReference>
<dbReference type="Pfam" id="PF25065">
    <property type="entry name" value="RM3_Med14"/>
    <property type="match status" value="1"/>
</dbReference>
<dbReference type="Pfam" id="PF25067">
    <property type="entry name" value="RM5_Med14"/>
    <property type="match status" value="1"/>
</dbReference>
<dbReference type="Pfam" id="PF22984">
    <property type="entry name" value="RM6_Med14"/>
    <property type="match status" value="1"/>
</dbReference>
<dbReference type="Pfam" id="PF22983">
    <property type="entry name" value="RM8_Med14"/>
    <property type="match status" value="1"/>
</dbReference>
<proteinExistence type="evidence at protein level"/>
<organism>
    <name type="scientific">Homo sapiens</name>
    <name type="common">Human</name>
    <dbReference type="NCBI Taxonomy" id="9606"/>
    <lineage>
        <taxon>Eukaryota</taxon>
        <taxon>Metazoa</taxon>
        <taxon>Chordata</taxon>
        <taxon>Craniata</taxon>
        <taxon>Vertebrata</taxon>
        <taxon>Euteleostomi</taxon>
        <taxon>Mammalia</taxon>
        <taxon>Eutheria</taxon>
        <taxon>Euarchontoglires</taxon>
        <taxon>Primates</taxon>
        <taxon>Haplorrhini</taxon>
        <taxon>Catarrhini</taxon>
        <taxon>Hominidae</taxon>
        <taxon>Homo</taxon>
    </lineage>
</organism>
<accession>O60244</accession>
<accession>Q4KMR7</accession>
<accession>Q9UNB3</accession>
<gene>
    <name type="primary">MED14</name>
    <name type="synonym">ARC150</name>
    <name type="synonym">CRSP2</name>
    <name type="synonym">CXorf4</name>
    <name type="synonym">DRIP150</name>
    <name type="synonym">EXLM1</name>
    <name type="synonym">RGR1</name>
    <name type="synonym">TRAP170</name>
</gene>
<feature type="chain" id="PRO_0000079357" description="Mediator of RNA polymerase II transcription subunit 14">
    <location>
        <begin position="1"/>
        <end position="1454"/>
    </location>
</feature>
<feature type="region of interest" description="Disordered" evidence="2">
    <location>
        <begin position="1"/>
        <end position="34"/>
    </location>
</feature>
<feature type="region of interest" description="Interaction with STAT2" evidence="8">
    <location>
        <begin position="188"/>
        <end position="566"/>
    </location>
</feature>
<feature type="region of interest" description="Interaction with SREBF1" evidence="10">
    <location>
        <begin position="500"/>
        <end position="824"/>
    </location>
</feature>
<feature type="region of interest" description="Disordered" evidence="2">
    <location>
        <begin position="973"/>
        <end position="1167"/>
    </location>
</feature>
<feature type="short sequence motif" description="LXXLL motif 1">
    <location>
        <begin position="69"/>
        <end position="73"/>
    </location>
</feature>
<feature type="short sequence motif" description="LXXLL motif 2">
    <location>
        <begin position="1182"/>
        <end position="1186"/>
    </location>
</feature>
<feature type="compositionally biased region" description="Gly residues" evidence="2">
    <location>
        <begin position="14"/>
        <end position="23"/>
    </location>
</feature>
<feature type="compositionally biased region" description="Pro residues" evidence="2">
    <location>
        <begin position="25"/>
        <end position="34"/>
    </location>
</feature>
<feature type="compositionally biased region" description="Pro residues" evidence="2">
    <location>
        <begin position="1001"/>
        <end position="1011"/>
    </location>
</feature>
<feature type="compositionally biased region" description="Polar residues" evidence="2">
    <location>
        <begin position="1024"/>
        <end position="1054"/>
    </location>
</feature>
<feature type="compositionally biased region" description="Polar residues" evidence="2">
    <location>
        <begin position="1092"/>
        <end position="1101"/>
    </location>
</feature>
<feature type="compositionally biased region" description="Polar residues" evidence="2">
    <location>
        <begin position="1147"/>
        <end position="1156"/>
    </location>
</feature>
<feature type="modified residue" description="Phosphoserine" evidence="18 19 22">
    <location>
        <position position="617"/>
    </location>
</feature>
<feature type="modified residue" description="Phosphoserine" evidence="19">
    <location>
        <position position="986"/>
    </location>
</feature>
<feature type="modified residue" description="Phosphoserine" evidence="20 21 22">
    <location>
        <position position="1112"/>
    </location>
</feature>
<feature type="modified residue" description="Phosphoserine" evidence="21 22">
    <location>
        <position position="1119"/>
    </location>
</feature>
<feature type="modified residue" description="Phosphoserine" evidence="17 20 21 22">
    <location>
        <position position="1128"/>
    </location>
</feature>
<feature type="modified residue" description="Phosphoserine" evidence="17 20 21 22">
    <location>
        <position position="1136"/>
    </location>
</feature>
<feature type="modified residue" description="Phosphoserine" evidence="17 22">
    <location>
        <position position="1144"/>
    </location>
</feature>
<feature type="sequence variant" id="VAR_036608" description="In a breast cancer sample; somatic mutation." evidence="14">
    <original>F</original>
    <variation>L</variation>
    <location>
        <position position="1325"/>
    </location>
</feature>
<feature type="sequence conflict" description="In Ref. 4; AAD24360." evidence="16" ref="4">
    <original>HS</original>
    <variation>LT</variation>
    <location>
        <begin position="309"/>
        <end position="310"/>
    </location>
</feature>
<feature type="sequence conflict" description="In Ref. 1; BAA28626, 2; AAD12725 and 3; AAG22547." evidence="16" ref="1 2 3">
    <original>V</original>
    <variation>L</variation>
    <location>
        <position position="1265"/>
    </location>
</feature>
<feature type="sequence conflict" description="In Ref. 1; BAA28626, 2; AAD12725 and 3; AAG22547." evidence="16" ref="1 2 3">
    <original>G</original>
    <variation>V</variation>
    <location>
        <position position="1451"/>
    </location>
</feature>
<feature type="helix" evidence="23">
    <location>
        <begin position="51"/>
        <end position="72"/>
    </location>
</feature>
<feature type="turn" evidence="23">
    <location>
        <begin position="73"/>
        <end position="75"/>
    </location>
</feature>
<feature type="helix" evidence="23">
    <location>
        <begin position="78"/>
        <end position="105"/>
    </location>
</feature>
<feature type="helix" evidence="23">
    <location>
        <begin position="109"/>
        <end position="141"/>
    </location>
</feature>
<feature type="turn" evidence="23">
    <location>
        <begin position="142"/>
        <end position="147"/>
    </location>
</feature>
<feature type="helix" evidence="23">
    <location>
        <begin position="154"/>
        <end position="161"/>
    </location>
</feature>
<feature type="strand" evidence="23">
    <location>
        <begin position="162"/>
        <end position="165"/>
    </location>
</feature>
<feature type="helix" evidence="23">
    <location>
        <begin position="172"/>
        <end position="177"/>
    </location>
</feature>
<feature type="helix" evidence="23">
    <location>
        <begin position="187"/>
        <end position="203"/>
    </location>
</feature>
<feature type="helix" evidence="23">
    <location>
        <begin position="218"/>
        <end position="220"/>
    </location>
</feature>
<feature type="strand" evidence="23">
    <location>
        <begin position="224"/>
        <end position="226"/>
    </location>
</feature>
<feature type="turn" evidence="23">
    <location>
        <begin position="227"/>
        <end position="229"/>
    </location>
</feature>
<feature type="strand" evidence="23">
    <location>
        <begin position="230"/>
        <end position="236"/>
    </location>
</feature>
<feature type="strand" evidence="23">
    <location>
        <begin position="240"/>
        <end position="242"/>
    </location>
</feature>
<feature type="strand" evidence="23">
    <location>
        <begin position="245"/>
        <end position="252"/>
    </location>
</feature>
<feature type="turn" evidence="23">
    <location>
        <begin position="257"/>
        <end position="259"/>
    </location>
</feature>
<feature type="helix" evidence="23">
    <location>
        <begin position="268"/>
        <end position="283"/>
    </location>
</feature>
<feature type="helix" evidence="23">
    <location>
        <begin position="288"/>
        <end position="317"/>
    </location>
</feature>
<feature type="strand" evidence="23">
    <location>
        <begin position="321"/>
        <end position="330"/>
    </location>
</feature>
<feature type="turn" evidence="23">
    <location>
        <begin position="331"/>
        <end position="333"/>
    </location>
</feature>
<feature type="strand" evidence="23">
    <location>
        <begin position="334"/>
        <end position="340"/>
    </location>
</feature>
<feature type="strand" evidence="23">
    <location>
        <begin position="355"/>
        <end position="360"/>
    </location>
</feature>
<feature type="strand" evidence="23">
    <location>
        <begin position="371"/>
        <end position="373"/>
    </location>
</feature>
<feature type="turn" evidence="23">
    <location>
        <begin position="375"/>
        <end position="377"/>
    </location>
</feature>
<feature type="helix" evidence="23">
    <location>
        <begin position="383"/>
        <end position="388"/>
    </location>
</feature>
<feature type="helix" evidence="23">
    <location>
        <begin position="397"/>
        <end position="423"/>
    </location>
</feature>
<feature type="strand" evidence="23">
    <location>
        <begin position="430"/>
        <end position="432"/>
    </location>
</feature>
<feature type="turn" evidence="23">
    <location>
        <begin position="433"/>
        <end position="436"/>
    </location>
</feature>
<feature type="strand" evidence="23">
    <location>
        <begin position="437"/>
        <end position="445"/>
    </location>
</feature>
<feature type="strand" evidence="23">
    <location>
        <begin position="448"/>
        <end position="456"/>
    </location>
</feature>
<feature type="turn" evidence="23">
    <location>
        <begin position="458"/>
        <end position="460"/>
    </location>
</feature>
<feature type="strand" evidence="23">
    <location>
        <begin position="463"/>
        <end position="466"/>
    </location>
</feature>
<feature type="helix" evidence="23">
    <location>
        <begin position="472"/>
        <end position="484"/>
    </location>
</feature>
<feature type="helix" evidence="23">
    <location>
        <begin position="486"/>
        <end position="488"/>
    </location>
</feature>
<feature type="helix" evidence="23">
    <location>
        <begin position="489"/>
        <end position="506"/>
    </location>
</feature>
<feature type="turn" evidence="23">
    <location>
        <begin position="507"/>
        <end position="509"/>
    </location>
</feature>
<feature type="strand" evidence="23">
    <location>
        <begin position="510"/>
        <end position="518"/>
    </location>
</feature>
<feature type="strand" evidence="23">
    <location>
        <begin position="526"/>
        <end position="528"/>
    </location>
</feature>
<feature type="turn" evidence="23">
    <location>
        <begin position="529"/>
        <end position="532"/>
    </location>
</feature>
<feature type="strand" evidence="23">
    <location>
        <begin position="537"/>
        <end position="545"/>
    </location>
</feature>
<feature type="strand" evidence="23">
    <location>
        <begin position="547"/>
        <end position="556"/>
    </location>
</feature>
<feature type="strand" evidence="23">
    <location>
        <begin position="564"/>
        <end position="573"/>
    </location>
</feature>
<feature type="strand" evidence="23">
    <location>
        <begin position="584"/>
        <end position="587"/>
    </location>
</feature>
<feature type="helix" evidence="23">
    <location>
        <begin position="639"/>
        <end position="651"/>
    </location>
</feature>
<feature type="helix" evidence="23">
    <location>
        <begin position="653"/>
        <end position="663"/>
    </location>
</feature>
<feature type="strand" evidence="23">
    <location>
        <begin position="675"/>
        <end position="678"/>
    </location>
</feature>
<feature type="strand" evidence="23">
    <location>
        <begin position="681"/>
        <end position="685"/>
    </location>
</feature>
<feature type="strand" evidence="23">
    <location>
        <begin position="691"/>
        <end position="693"/>
    </location>
</feature>
<feature type="helix" evidence="23">
    <location>
        <begin position="695"/>
        <end position="701"/>
    </location>
</feature>
<feature type="turn" evidence="23">
    <location>
        <begin position="702"/>
        <end position="704"/>
    </location>
</feature>
<feature type="strand" evidence="23">
    <location>
        <begin position="705"/>
        <end position="714"/>
    </location>
</feature>
<feature type="helix" evidence="23">
    <location>
        <begin position="715"/>
        <end position="717"/>
    </location>
</feature>
<feature type="strand" evidence="23">
    <location>
        <begin position="719"/>
        <end position="728"/>
    </location>
</feature>
<feature type="strand" evidence="23">
    <location>
        <begin position="734"/>
        <end position="736"/>
    </location>
</feature>
<feature type="strand" evidence="23">
    <location>
        <begin position="739"/>
        <end position="749"/>
    </location>
</feature>
<feature type="strand" evidence="23">
    <location>
        <begin position="753"/>
        <end position="755"/>
    </location>
</feature>
<feature type="helix" evidence="23">
    <location>
        <begin position="760"/>
        <end position="786"/>
    </location>
</feature>
<feature type="strand" evidence="23">
    <location>
        <begin position="787"/>
        <end position="789"/>
    </location>
</feature>
<feature type="helix" evidence="23">
    <location>
        <begin position="794"/>
        <end position="797"/>
    </location>
</feature>
<feature type="strand" evidence="23">
    <location>
        <begin position="798"/>
        <end position="803"/>
    </location>
</feature>
<feature type="strand" evidence="23">
    <location>
        <begin position="808"/>
        <end position="812"/>
    </location>
</feature>
<feature type="turn" evidence="23">
    <location>
        <begin position="813"/>
        <end position="816"/>
    </location>
</feature>
<feature type="strand" evidence="23">
    <location>
        <begin position="818"/>
        <end position="825"/>
    </location>
</feature>
<feature type="turn" evidence="23">
    <location>
        <begin position="826"/>
        <end position="829"/>
    </location>
</feature>
<feature type="strand" evidence="23">
    <location>
        <begin position="830"/>
        <end position="837"/>
    </location>
</feature>
<feature type="strand" evidence="23">
    <location>
        <begin position="839"/>
        <end position="842"/>
    </location>
</feature>
<feature type="helix" evidence="23">
    <location>
        <begin position="852"/>
        <end position="861"/>
    </location>
</feature>
<feature type="helix" evidence="23">
    <location>
        <begin position="865"/>
        <end position="882"/>
    </location>
</feature>
<feature type="strand" evidence="23">
    <location>
        <begin position="904"/>
        <end position="908"/>
    </location>
</feature>
<feature type="strand" evidence="23">
    <location>
        <begin position="913"/>
        <end position="918"/>
    </location>
</feature>
<feature type="turn" evidence="23">
    <location>
        <begin position="919"/>
        <end position="921"/>
    </location>
</feature>
<feature type="strand" evidence="23">
    <location>
        <begin position="922"/>
        <end position="929"/>
    </location>
</feature>
<feature type="turn" evidence="23">
    <location>
        <begin position="930"/>
        <end position="932"/>
    </location>
</feature>
<feature type="strand" evidence="23">
    <location>
        <begin position="933"/>
        <end position="936"/>
    </location>
</feature>
<feature type="strand" evidence="23">
    <location>
        <begin position="939"/>
        <end position="941"/>
    </location>
</feature>
<feature type="helix" evidence="23">
    <location>
        <begin position="959"/>
        <end position="966"/>
    </location>
</feature>
<feature type="helix" evidence="23">
    <location>
        <begin position="1180"/>
        <end position="1186"/>
    </location>
</feature>
<feature type="helix" evidence="23">
    <location>
        <begin position="1206"/>
        <end position="1225"/>
    </location>
</feature>
<feature type="strand" evidence="23">
    <location>
        <begin position="1240"/>
        <end position="1242"/>
    </location>
</feature>
<feature type="strand" evidence="23">
    <location>
        <begin position="1245"/>
        <end position="1247"/>
    </location>
</feature>
<feature type="strand" evidence="23">
    <location>
        <begin position="1249"/>
        <end position="1253"/>
    </location>
</feature>
<feature type="strand" evidence="23">
    <location>
        <begin position="1255"/>
        <end position="1259"/>
    </location>
</feature>
<feature type="strand" evidence="23">
    <location>
        <begin position="1261"/>
        <end position="1264"/>
    </location>
</feature>
<feature type="helix" evidence="23">
    <location>
        <begin position="1277"/>
        <end position="1288"/>
    </location>
</feature>
<feature type="helix" evidence="23">
    <location>
        <begin position="1296"/>
        <end position="1305"/>
    </location>
</feature>
<feature type="helix" evidence="23">
    <location>
        <begin position="1312"/>
        <end position="1324"/>
    </location>
</feature>
<feature type="strand" evidence="23">
    <location>
        <begin position="1342"/>
        <end position="1344"/>
    </location>
</feature>
<feature type="strand" evidence="23">
    <location>
        <begin position="1358"/>
        <end position="1360"/>
    </location>
</feature>
<sequence length="1454" mass="160607">MAPVQLENHQLVPPGGGGGGSGGPPSAPAPPPPGAAVAAAAAAAASPGYRLSTLIEFLLHRAYSELMVLTDLLPRKSDVERKIEIVQFASRTRQLFVRLLALVKWANNAGKVEKCAMISSFLDQQAILFVDTADRLASLARDALVHARLPSFAIPYAIDVLTTGSYPRLPTCIRDKIIPPDPITKIEKQATLHQLNQILRHRLVTTDLPPQLANLTVANGRVKFRVEGEFEATLTVMGDDPDVPWRLLKLEILVEDKETGDGRALVHSMQISFIHQLVQSRLFADEKPLQDMYNCLHSFCLSLQLEVLHSQTLMLIRERWGDLVQVERYHAGKCLSLSVWNQQVLGRKTGTASVHKVTIKIDENDVSKPLQIFHDPPLPASDSKLVERAMKIDHLSIEKLLIDSVHARAHQKLQELKAILRGFNANENSSIETALPALVVPILEPCGNSECLHIFVDLHSGMFQLMLYGLDQATLDDMEKSVNDDMKRIIPWIQQLKFWLGQQRCKQSIKHLPTISSETLQLSNYSTHPIGNLSKNKLFIKLTRLPQYYIVVEMLEVPNKPTQLSYKYYFMSVNAADREDSPAMALLLQQFKENIQDLVFRTKTGKQTRTNAKRKLSDDPCPVESKKTKRAGEMCAFNKVLAHFVAMCDTNMPFVGLRLELSNLEIPHQGVQVEGDGFSHAIRLLKIPPCKGITEETQKALDRSLLDCTFRLQGRNNRTWVAELVFANCPLNGTSTREQGPSRHVYLTYENLLSEPVGGRKVVEMFLNDWNSIARLYECVLEFARSLPDIPAHLNIFSEVRVYNYRKLILCYGTTKGSSISIQWNSIHQKFHISLGTVGPNSGCSNCHNTILHQLQEMFNKTPNVVQLLQVLFDTQAPLNAINKLPTVPMLGLTQRTNTAYQCFSILPQSSTHIRLAFRNMYCIDIYCRSRGVVAIRDGAYSLFDNSKLVEGFYPAPGLKTFLNMFVDSNQDARRRSVNEDDNPPSPIGGDMMDSLISQLQPPPQQQPFPKQPGTSGAYPLTSPPTSYHSTVNQSPSMMHTQSPGNLHAASSPSGALRAPSPASFVPTPPPSSHGISIGPGASFASPHGTLDPSSPYTMVSPSGRAGNWPGSPQVSGPSPAARMPGMSPANPSLHSPVPDASHSPRAGTSSQTMPTNMPPPRKLPQRSWAASIPTILTHSALNILLLPSPTPGLVPGLAGSYLCSPLERFLGSVIMRRHLQRIIQQETLQLINSNEPGVIMFKTDALKCRVALSPKTNQTLQLKVTPENAGQWKPDELQVLEKFFETRVAGPPFKANTLIAFTKLLGAPTHILRDCVHIMKLELFPDQATQLKWNVQFCLTIPPSAPPIAPPGTPAVVLKSKMLFFLQLTQKTSVPPQEPVSIIVPIIYDMASGTTQQADIPRQQNSSVAAPMMVSNILKRFAEMNPPRQGECTIFAAVRDLMANLTLPPGGRP</sequence>
<protein>
    <recommendedName>
        <fullName>Mediator of RNA polymerase II transcription subunit 14</fullName>
    </recommendedName>
    <alternativeName>
        <fullName>Activator-recruited cofactor 150 kDa component</fullName>
        <shortName>ARC150</shortName>
    </alternativeName>
    <alternativeName>
        <fullName>Cofactor required for Sp1 transcriptional activation subunit 2</fullName>
        <shortName>CRSP complex subunit 2</shortName>
    </alternativeName>
    <alternativeName>
        <fullName>Mediator complex subunit 14</fullName>
    </alternativeName>
    <alternativeName>
        <fullName>RGR1 homolog</fullName>
        <shortName>hRGR1</shortName>
    </alternativeName>
    <alternativeName>
        <fullName>Thyroid hormone receptor-associated protein complex 170 kDa component</fullName>
        <shortName>Trap170</shortName>
    </alternativeName>
    <alternativeName>
        <fullName>Transcriptional coactivator CRSP150</fullName>
    </alternativeName>
    <alternativeName>
        <fullName>Vitamin D3 receptor-interacting protein complex 150 kDa component</fullName>
        <shortName>DRIP150</shortName>
    </alternativeName>
</protein>
<comment type="function">
    <text evidence="10 11 13">Component of the Mediator complex, a coactivator involved in the regulated transcription of nearly all RNA polymerase II-dependent genes. Mediator functions as a bridge to convey information from gene-specific regulatory proteins to the basal RNA polymerase II transcription machinery. Mediator is recruited to promoters by direct interactions with regulatory proteins and serves as a scaffold for the assembly of a functional preinitiation complex with RNA polymerase II and the general transcription factors.</text>
</comment>
<comment type="subunit">
    <text evidence="1 3 4 5 6 7 8 9 10 11 12 13 15">Interacts with GATA1 (By similarity). Component of the Mediator complex, which is composed of MED1, MED4, MED6, MED7, MED8, MED9, MED10, MED11, MED12, MED13, MED13L, MED14, MED15, MED16, MED17, MED18, MED19, MED20, MED21, MED22, MED23, MED24, MED25, MED26, MED27, MED29, MED30, MED31, CCNC, CDK8 and CDC2L6/CDK11. The MED12, MED13, CCNC and CDK8 subunits form a distinct module termed the CDK8 module. Mediator containing the CDK8 module is less active than Mediator lacking this module in supporting transcriptional activation. Individual preparations of the Mediator complex lacking one or more distinct subunits have been variously termed ARC, CRSP, DRIP, PC2, SMCC and TRAP. Interacts with AR, ESR1, SREBF1 and STAT2.</text>
</comment>
<comment type="interaction">
    <interactant intactId="EBI-394489">
        <id>O60244</id>
    </interactant>
    <interactant intactId="EBI-394506">
        <id>Q96RN5</id>
        <label>MED15</label>
    </interactant>
    <organismsDiffer>false</organismsDiffer>
    <experiments>3</experiments>
</comment>
<comment type="interaction">
    <interactant intactId="EBI-394489">
        <id>O60244</id>
    </interactant>
    <interactant intactId="EBI-394541">
        <id>Q9Y2X0</id>
        <label>MED16</label>
    </interactant>
    <organismsDiffer>false</organismsDiffer>
    <experiments>3</experiments>
</comment>
<comment type="interaction">
    <interactant intactId="EBI-394489">
        <id>O60244</id>
    </interactant>
    <interactant intactId="EBI-311161">
        <id>Q9ULK4</id>
        <label>MED23</label>
    </interactant>
    <organismsDiffer>false</organismsDiffer>
    <experiments>6</experiments>
</comment>
<comment type="interaction">
    <interactant intactId="EBI-394489">
        <id>O60244</id>
    </interactant>
    <interactant intactId="EBI-394523">
        <id>O75448</id>
        <label>MED24</label>
    </interactant>
    <organismsDiffer>false</organismsDiffer>
    <experiments>4</experiments>
</comment>
<comment type="interaction">
    <interactant intactId="EBI-394489">
        <id>O60244</id>
    </interactant>
    <interactant intactId="EBI-394558">
        <id>Q71SY5</id>
        <label>MED25</label>
    </interactant>
    <organismsDiffer>false</organismsDiffer>
    <experiments>3</experiments>
</comment>
<comment type="subcellular location">
    <subcellularLocation>
        <location evidence="16">Nucleus</location>
    </subcellularLocation>
</comment>
<comment type="tissue specificity">
    <text>Ubiquitous.</text>
</comment>
<comment type="similarity">
    <text evidence="16">Belongs to the Mediator complex subunit 14 family.</text>
</comment>
<evidence type="ECO:0000250" key="1"/>
<evidence type="ECO:0000256" key="2">
    <source>
        <dbReference type="SAM" id="MobiDB-lite"/>
    </source>
</evidence>
<evidence type="ECO:0000269" key="3">
    <source>
    </source>
</evidence>
<evidence type="ECO:0000269" key="4">
    <source>
    </source>
</evidence>
<evidence type="ECO:0000269" key="5">
    <source>
    </source>
</evidence>
<evidence type="ECO:0000269" key="6">
    <source>
    </source>
</evidence>
<evidence type="ECO:0000269" key="7">
    <source>
    </source>
</evidence>
<evidence type="ECO:0000269" key="8">
    <source>
    </source>
</evidence>
<evidence type="ECO:0000269" key="9">
    <source>
    </source>
</evidence>
<evidence type="ECO:0000269" key="10">
    <source>
    </source>
</evidence>
<evidence type="ECO:0000269" key="11">
    <source>
    </source>
</evidence>
<evidence type="ECO:0000269" key="12">
    <source>
    </source>
</evidence>
<evidence type="ECO:0000269" key="13">
    <source>
    </source>
</evidence>
<evidence type="ECO:0000269" key="14">
    <source>
    </source>
</evidence>
<evidence type="ECO:0000269" key="15">
    <source>
    </source>
</evidence>
<evidence type="ECO:0000305" key="16"/>
<evidence type="ECO:0007744" key="17">
    <source>
    </source>
</evidence>
<evidence type="ECO:0007744" key="18">
    <source>
    </source>
</evidence>
<evidence type="ECO:0007744" key="19">
    <source>
    </source>
</evidence>
<evidence type="ECO:0007744" key="20">
    <source>
    </source>
</evidence>
<evidence type="ECO:0007744" key="21">
    <source>
    </source>
</evidence>
<evidence type="ECO:0007744" key="22">
    <source>
    </source>
</evidence>
<evidence type="ECO:0007829" key="23">
    <source>
        <dbReference type="PDB" id="7EMF"/>
    </source>
</evidence>